<accession>A7IIA9</accession>
<gene>
    <name evidence="1" type="primary">rplS</name>
    <name type="ordered locus">Xaut_2510</name>
</gene>
<sequence length="140" mass="15430">MNIIQTLEAEQAAKLAEKRAIPDFQPGDTIIVNVKVVEGERSRVQAYEGVCIARSGGGLNESFTVRKISYGEGVERVFPVYAPLIDSIKVVRRGKVRRAKLYYLRDRRGKSARIAERQDRTADGKIKKGGKSAPAPTAAE</sequence>
<evidence type="ECO:0000255" key="1">
    <source>
        <dbReference type="HAMAP-Rule" id="MF_00402"/>
    </source>
</evidence>
<evidence type="ECO:0000256" key="2">
    <source>
        <dbReference type="SAM" id="MobiDB-lite"/>
    </source>
</evidence>
<evidence type="ECO:0000305" key="3"/>
<protein>
    <recommendedName>
        <fullName evidence="1">Large ribosomal subunit protein bL19</fullName>
    </recommendedName>
    <alternativeName>
        <fullName evidence="3">50S ribosomal protein L19</fullName>
    </alternativeName>
</protein>
<keyword id="KW-1185">Reference proteome</keyword>
<keyword id="KW-0687">Ribonucleoprotein</keyword>
<keyword id="KW-0689">Ribosomal protein</keyword>
<dbReference type="EMBL" id="CP000781">
    <property type="protein sequence ID" value="ABS67752.1"/>
    <property type="molecule type" value="Genomic_DNA"/>
</dbReference>
<dbReference type="SMR" id="A7IIA9"/>
<dbReference type="STRING" id="78245.Xaut_2510"/>
<dbReference type="KEGG" id="xau:Xaut_2510"/>
<dbReference type="eggNOG" id="COG0335">
    <property type="taxonomic scope" value="Bacteria"/>
</dbReference>
<dbReference type="HOGENOM" id="CLU_103507_2_1_5"/>
<dbReference type="OrthoDB" id="9803541at2"/>
<dbReference type="PhylomeDB" id="A7IIA9"/>
<dbReference type="Proteomes" id="UP000002417">
    <property type="component" value="Chromosome"/>
</dbReference>
<dbReference type="GO" id="GO:0022625">
    <property type="term" value="C:cytosolic large ribosomal subunit"/>
    <property type="evidence" value="ECO:0007669"/>
    <property type="project" value="TreeGrafter"/>
</dbReference>
<dbReference type="GO" id="GO:0003735">
    <property type="term" value="F:structural constituent of ribosome"/>
    <property type="evidence" value="ECO:0007669"/>
    <property type="project" value="InterPro"/>
</dbReference>
<dbReference type="GO" id="GO:0006412">
    <property type="term" value="P:translation"/>
    <property type="evidence" value="ECO:0007669"/>
    <property type="project" value="UniProtKB-UniRule"/>
</dbReference>
<dbReference type="FunFam" id="2.30.30.790:FF:000001">
    <property type="entry name" value="50S ribosomal protein L19"/>
    <property type="match status" value="1"/>
</dbReference>
<dbReference type="Gene3D" id="2.30.30.790">
    <property type="match status" value="1"/>
</dbReference>
<dbReference type="HAMAP" id="MF_00402">
    <property type="entry name" value="Ribosomal_bL19"/>
    <property type="match status" value="1"/>
</dbReference>
<dbReference type="InterPro" id="IPR001857">
    <property type="entry name" value="Ribosomal_bL19"/>
</dbReference>
<dbReference type="InterPro" id="IPR018257">
    <property type="entry name" value="Ribosomal_bL19_CS"/>
</dbReference>
<dbReference type="InterPro" id="IPR038657">
    <property type="entry name" value="Ribosomal_bL19_sf"/>
</dbReference>
<dbReference type="InterPro" id="IPR008991">
    <property type="entry name" value="Translation_prot_SH3-like_sf"/>
</dbReference>
<dbReference type="NCBIfam" id="TIGR01024">
    <property type="entry name" value="rplS_bact"/>
    <property type="match status" value="1"/>
</dbReference>
<dbReference type="PANTHER" id="PTHR15680:SF9">
    <property type="entry name" value="LARGE RIBOSOMAL SUBUNIT PROTEIN BL19M"/>
    <property type="match status" value="1"/>
</dbReference>
<dbReference type="PANTHER" id="PTHR15680">
    <property type="entry name" value="RIBOSOMAL PROTEIN L19"/>
    <property type="match status" value="1"/>
</dbReference>
<dbReference type="Pfam" id="PF01245">
    <property type="entry name" value="Ribosomal_L19"/>
    <property type="match status" value="1"/>
</dbReference>
<dbReference type="PIRSF" id="PIRSF002191">
    <property type="entry name" value="Ribosomal_L19"/>
    <property type="match status" value="1"/>
</dbReference>
<dbReference type="PRINTS" id="PR00061">
    <property type="entry name" value="RIBOSOMALL19"/>
</dbReference>
<dbReference type="SUPFAM" id="SSF50104">
    <property type="entry name" value="Translation proteins SH3-like domain"/>
    <property type="match status" value="1"/>
</dbReference>
<dbReference type="PROSITE" id="PS01015">
    <property type="entry name" value="RIBOSOMAL_L19"/>
    <property type="match status" value="1"/>
</dbReference>
<proteinExistence type="inferred from homology"/>
<reference key="1">
    <citation type="submission" date="2007-07" db="EMBL/GenBank/DDBJ databases">
        <title>Complete sequence of chromosome of Xanthobacter autotrophicus Py2.</title>
        <authorList>
            <consortium name="US DOE Joint Genome Institute"/>
            <person name="Copeland A."/>
            <person name="Lucas S."/>
            <person name="Lapidus A."/>
            <person name="Barry K."/>
            <person name="Glavina del Rio T."/>
            <person name="Hammon N."/>
            <person name="Israni S."/>
            <person name="Dalin E."/>
            <person name="Tice H."/>
            <person name="Pitluck S."/>
            <person name="Sims D."/>
            <person name="Brettin T."/>
            <person name="Bruce D."/>
            <person name="Detter J.C."/>
            <person name="Han C."/>
            <person name="Tapia R."/>
            <person name="Brainard J."/>
            <person name="Schmutz J."/>
            <person name="Larimer F."/>
            <person name="Land M."/>
            <person name="Hauser L."/>
            <person name="Kyrpides N."/>
            <person name="Kim E."/>
            <person name="Ensigns S.A."/>
            <person name="Richardson P."/>
        </authorList>
    </citation>
    <scope>NUCLEOTIDE SEQUENCE [LARGE SCALE GENOMIC DNA]</scope>
    <source>
        <strain>ATCC BAA-1158 / Py2</strain>
    </source>
</reference>
<feature type="chain" id="PRO_1000193921" description="Large ribosomal subunit protein bL19">
    <location>
        <begin position="1"/>
        <end position="140"/>
    </location>
</feature>
<feature type="region of interest" description="Disordered" evidence="2">
    <location>
        <begin position="113"/>
        <end position="140"/>
    </location>
</feature>
<feature type="compositionally biased region" description="Basic and acidic residues" evidence="2">
    <location>
        <begin position="113"/>
        <end position="126"/>
    </location>
</feature>
<organism>
    <name type="scientific">Xanthobacter autotrophicus (strain ATCC BAA-1158 / Py2)</name>
    <dbReference type="NCBI Taxonomy" id="78245"/>
    <lineage>
        <taxon>Bacteria</taxon>
        <taxon>Pseudomonadati</taxon>
        <taxon>Pseudomonadota</taxon>
        <taxon>Alphaproteobacteria</taxon>
        <taxon>Hyphomicrobiales</taxon>
        <taxon>Xanthobacteraceae</taxon>
        <taxon>Xanthobacter</taxon>
    </lineage>
</organism>
<name>RL19_XANP2</name>
<comment type="function">
    <text evidence="1">This protein is located at the 30S-50S ribosomal subunit interface and may play a role in the structure and function of the aminoacyl-tRNA binding site.</text>
</comment>
<comment type="similarity">
    <text evidence="1">Belongs to the bacterial ribosomal protein bL19 family.</text>
</comment>